<feature type="chain" id="PRO_0000349833" description="tRNA-specific 2-thiouridylase MnmA">
    <location>
        <begin position="1"/>
        <end position="396"/>
    </location>
</feature>
<feature type="region of interest" description="Interaction with tRNA" evidence="1">
    <location>
        <begin position="171"/>
        <end position="173"/>
    </location>
</feature>
<feature type="region of interest" description="Interaction with tRNA" evidence="1">
    <location>
        <begin position="326"/>
        <end position="327"/>
    </location>
</feature>
<feature type="active site" description="Nucleophile" evidence="1">
    <location>
        <position position="122"/>
    </location>
</feature>
<feature type="active site" description="Cysteine persulfide intermediate" evidence="1">
    <location>
        <position position="221"/>
    </location>
</feature>
<feature type="binding site" evidence="1">
    <location>
        <begin position="35"/>
        <end position="42"/>
    </location>
    <ligand>
        <name>ATP</name>
        <dbReference type="ChEBI" id="CHEBI:30616"/>
    </ligand>
</feature>
<feature type="binding site" evidence="1">
    <location>
        <position position="61"/>
    </location>
    <ligand>
        <name>ATP</name>
        <dbReference type="ChEBI" id="CHEBI:30616"/>
    </ligand>
</feature>
<feature type="binding site" evidence="1">
    <location>
        <position position="147"/>
    </location>
    <ligand>
        <name>ATP</name>
        <dbReference type="ChEBI" id="CHEBI:30616"/>
    </ligand>
</feature>
<feature type="site" description="Interaction with tRNA" evidence="1">
    <location>
        <position position="148"/>
    </location>
</feature>
<feature type="site" description="Interaction with tRNA" evidence="1">
    <location>
        <position position="369"/>
    </location>
</feature>
<feature type="disulfide bond" description="Alternate" evidence="1">
    <location>
        <begin position="122"/>
        <end position="221"/>
    </location>
</feature>
<name>MNMA_PARMW</name>
<gene>
    <name evidence="1" type="primary">mnmA</name>
    <name type="ordered locus">SYNW1622</name>
</gene>
<dbReference type="EC" id="2.8.1.13" evidence="1"/>
<dbReference type="EMBL" id="BX569693">
    <property type="protein sequence ID" value="CAE08137.1"/>
    <property type="molecule type" value="Genomic_DNA"/>
</dbReference>
<dbReference type="RefSeq" id="WP_011128486.1">
    <property type="nucleotide sequence ID" value="NC_005070.1"/>
</dbReference>
<dbReference type="SMR" id="Q7TTU4"/>
<dbReference type="STRING" id="84588.SYNW1622"/>
<dbReference type="KEGG" id="syw:SYNW1622"/>
<dbReference type="eggNOG" id="COG0482">
    <property type="taxonomic scope" value="Bacteria"/>
</dbReference>
<dbReference type="HOGENOM" id="CLU_035188_0_0_3"/>
<dbReference type="Proteomes" id="UP000001422">
    <property type="component" value="Chromosome"/>
</dbReference>
<dbReference type="GO" id="GO:0005737">
    <property type="term" value="C:cytoplasm"/>
    <property type="evidence" value="ECO:0007669"/>
    <property type="project" value="UniProtKB-SubCell"/>
</dbReference>
<dbReference type="GO" id="GO:0005524">
    <property type="term" value="F:ATP binding"/>
    <property type="evidence" value="ECO:0007669"/>
    <property type="project" value="UniProtKB-KW"/>
</dbReference>
<dbReference type="GO" id="GO:0000049">
    <property type="term" value="F:tRNA binding"/>
    <property type="evidence" value="ECO:0007669"/>
    <property type="project" value="UniProtKB-KW"/>
</dbReference>
<dbReference type="GO" id="GO:0103016">
    <property type="term" value="F:tRNA-uridine 2-sulfurtransferase activity"/>
    <property type="evidence" value="ECO:0007669"/>
    <property type="project" value="UniProtKB-EC"/>
</dbReference>
<dbReference type="GO" id="GO:0002143">
    <property type="term" value="P:tRNA wobble position uridine thiolation"/>
    <property type="evidence" value="ECO:0007669"/>
    <property type="project" value="TreeGrafter"/>
</dbReference>
<dbReference type="CDD" id="cd01998">
    <property type="entry name" value="MnmA_TRMU-like"/>
    <property type="match status" value="1"/>
</dbReference>
<dbReference type="FunFam" id="2.30.30.280:FF:000001">
    <property type="entry name" value="tRNA-specific 2-thiouridylase MnmA"/>
    <property type="match status" value="1"/>
</dbReference>
<dbReference type="Gene3D" id="2.30.30.280">
    <property type="entry name" value="Adenine nucleotide alpha hydrolases-like domains"/>
    <property type="match status" value="1"/>
</dbReference>
<dbReference type="Gene3D" id="3.40.50.620">
    <property type="entry name" value="HUPs"/>
    <property type="match status" value="1"/>
</dbReference>
<dbReference type="Gene3D" id="2.40.30.10">
    <property type="entry name" value="Translation factors"/>
    <property type="match status" value="1"/>
</dbReference>
<dbReference type="HAMAP" id="MF_00144">
    <property type="entry name" value="tRNA_thiouridyl_MnmA"/>
    <property type="match status" value="1"/>
</dbReference>
<dbReference type="InterPro" id="IPR004506">
    <property type="entry name" value="MnmA-like"/>
</dbReference>
<dbReference type="InterPro" id="IPR046885">
    <property type="entry name" value="MnmA-like_C"/>
</dbReference>
<dbReference type="InterPro" id="IPR046884">
    <property type="entry name" value="MnmA-like_central"/>
</dbReference>
<dbReference type="InterPro" id="IPR023382">
    <property type="entry name" value="MnmA-like_central_sf"/>
</dbReference>
<dbReference type="InterPro" id="IPR014729">
    <property type="entry name" value="Rossmann-like_a/b/a_fold"/>
</dbReference>
<dbReference type="NCBIfam" id="NF001138">
    <property type="entry name" value="PRK00143.1"/>
    <property type="match status" value="1"/>
</dbReference>
<dbReference type="NCBIfam" id="TIGR00420">
    <property type="entry name" value="trmU"/>
    <property type="match status" value="1"/>
</dbReference>
<dbReference type="PANTHER" id="PTHR11933:SF5">
    <property type="entry name" value="MITOCHONDRIAL TRNA-SPECIFIC 2-THIOURIDYLASE 1"/>
    <property type="match status" value="1"/>
</dbReference>
<dbReference type="PANTHER" id="PTHR11933">
    <property type="entry name" value="TRNA 5-METHYLAMINOMETHYL-2-THIOURIDYLATE -METHYLTRANSFERASE"/>
    <property type="match status" value="1"/>
</dbReference>
<dbReference type="Pfam" id="PF03054">
    <property type="entry name" value="tRNA_Me_trans"/>
    <property type="match status" value="1"/>
</dbReference>
<dbReference type="Pfam" id="PF20258">
    <property type="entry name" value="tRNA_Me_trans_C"/>
    <property type="match status" value="1"/>
</dbReference>
<dbReference type="Pfam" id="PF20259">
    <property type="entry name" value="tRNA_Me_trans_M"/>
    <property type="match status" value="1"/>
</dbReference>
<dbReference type="SUPFAM" id="SSF52402">
    <property type="entry name" value="Adenine nucleotide alpha hydrolases-like"/>
    <property type="match status" value="1"/>
</dbReference>
<reference key="1">
    <citation type="journal article" date="2003" name="Nature">
        <title>The genome of a motile marine Synechococcus.</title>
        <authorList>
            <person name="Palenik B."/>
            <person name="Brahamsha B."/>
            <person name="Larimer F.W."/>
            <person name="Land M.L."/>
            <person name="Hauser L."/>
            <person name="Chain P."/>
            <person name="Lamerdin J.E."/>
            <person name="Regala W."/>
            <person name="Allen E.E."/>
            <person name="McCarren J."/>
            <person name="Paulsen I.T."/>
            <person name="Dufresne A."/>
            <person name="Partensky F."/>
            <person name="Webb E.A."/>
            <person name="Waterbury J."/>
        </authorList>
    </citation>
    <scope>NUCLEOTIDE SEQUENCE [LARGE SCALE GENOMIC DNA]</scope>
    <source>
        <strain>WH8102</strain>
    </source>
</reference>
<sequence>MSSATSSTDRLPTAAGDAALQRLRTWPGEHRVAVGLSGGVDSSLTAALLVEAGWEVEGLTLWLMSGKGACCAEGLVDAAGICEQLGIPHHVVDTRDTFQREIVQRLVDGYREGITPLPCSQCNRSVKFGPMLDWAAEERGLPRIATGHYARIRHGGEQGRHQLLRGLDSRKDQSYFLYDLPQEVLGRIVFPLGELTKADTRGEAARHGLRTAEKPESQDLCLADHHGSMRAFLDAYLPPRQGEIVLSDGTVVGEHDGIEHFTIGQRKGLGVAWREPLHVIRLDPAMNQVVVAPRAEAGQRSCVVGAINWVSIAPLQQPLELEVQVRYRSEPVAAQLTPIPHTPEDEARQRPHRCRLQFLDDQFSITPGQAAVFYRGETVLGGGLIQRDDQAQTNRE</sequence>
<comment type="function">
    <text evidence="1">Catalyzes the 2-thiolation of uridine at the wobble position (U34) of tRNA, leading to the formation of s(2)U34.</text>
</comment>
<comment type="catalytic activity">
    <reaction evidence="1">
        <text>S-sulfanyl-L-cysteinyl-[protein] + uridine(34) in tRNA + AH2 + ATP = 2-thiouridine(34) in tRNA + L-cysteinyl-[protein] + A + AMP + diphosphate + H(+)</text>
        <dbReference type="Rhea" id="RHEA:47032"/>
        <dbReference type="Rhea" id="RHEA-COMP:10131"/>
        <dbReference type="Rhea" id="RHEA-COMP:11726"/>
        <dbReference type="Rhea" id="RHEA-COMP:11727"/>
        <dbReference type="Rhea" id="RHEA-COMP:11728"/>
        <dbReference type="ChEBI" id="CHEBI:13193"/>
        <dbReference type="ChEBI" id="CHEBI:15378"/>
        <dbReference type="ChEBI" id="CHEBI:17499"/>
        <dbReference type="ChEBI" id="CHEBI:29950"/>
        <dbReference type="ChEBI" id="CHEBI:30616"/>
        <dbReference type="ChEBI" id="CHEBI:33019"/>
        <dbReference type="ChEBI" id="CHEBI:61963"/>
        <dbReference type="ChEBI" id="CHEBI:65315"/>
        <dbReference type="ChEBI" id="CHEBI:87170"/>
        <dbReference type="ChEBI" id="CHEBI:456215"/>
        <dbReference type="EC" id="2.8.1.13"/>
    </reaction>
</comment>
<comment type="subcellular location">
    <subcellularLocation>
        <location evidence="1">Cytoplasm</location>
    </subcellularLocation>
</comment>
<comment type="similarity">
    <text evidence="1">Belongs to the MnmA/TRMU family.</text>
</comment>
<protein>
    <recommendedName>
        <fullName evidence="1">tRNA-specific 2-thiouridylase MnmA</fullName>
        <ecNumber evidence="1">2.8.1.13</ecNumber>
    </recommendedName>
</protein>
<proteinExistence type="inferred from homology"/>
<organism>
    <name type="scientific">Parasynechococcus marenigrum (strain WH8102)</name>
    <dbReference type="NCBI Taxonomy" id="84588"/>
    <lineage>
        <taxon>Bacteria</taxon>
        <taxon>Bacillati</taxon>
        <taxon>Cyanobacteriota</taxon>
        <taxon>Cyanophyceae</taxon>
        <taxon>Synechococcales</taxon>
        <taxon>Prochlorococcaceae</taxon>
        <taxon>Parasynechococcus</taxon>
        <taxon>Parasynechococcus marenigrum</taxon>
    </lineage>
</organism>
<accession>Q7TTU4</accession>
<evidence type="ECO:0000255" key="1">
    <source>
        <dbReference type="HAMAP-Rule" id="MF_00144"/>
    </source>
</evidence>
<keyword id="KW-0067">ATP-binding</keyword>
<keyword id="KW-0963">Cytoplasm</keyword>
<keyword id="KW-1015">Disulfide bond</keyword>
<keyword id="KW-0547">Nucleotide-binding</keyword>
<keyword id="KW-0694">RNA-binding</keyword>
<keyword id="KW-0808">Transferase</keyword>
<keyword id="KW-0819">tRNA processing</keyword>
<keyword id="KW-0820">tRNA-binding</keyword>